<proteinExistence type="inferred from homology"/>
<keyword id="KW-1185">Reference proteome</keyword>
<keyword id="KW-0687">Ribonucleoprotein</keyword>
<keyword id="KW-0689">Ribosomal protein</keyword>
<dbReference type="EMBL" id="CU234118">
    <property type="protein sequence ID" value="CAL74323.1"/>
    <property type="molecule type" value="Genomic_DNA"/>
</dbReference>
<dbReference type="RefSeq" id="WP_011923604.1">
    <property type="nucleotide sequence ID" value="NC_009445.1"/>
</dbReference>
<dbReference type="SMR" id="A4YK97"/>
<dbReference type="STRING" id="114615.BRADO0375"/>
<dbReference type="KEGG" id="bra:BRADO0375"/>
<dbReference type="eggNOG" id="COG0335">
    <property type="taxonomic scope" value="Bacteria"/>
</dbReference>
<dbReference type="HOGENOM" id="CLU_103507_2_1_5"/>
<dbReference type="OrthoDB" id="9803541at2"/>
<dbReference type="Proteomes" id="UP000001994">
    <property type="component" value="Chromosome"/>
</dbReference>
<dbReference type="GO" id="GO:0022625">
    <property type="term" value="C:cytosolic large ribosomal subunit"/>
    <property type="evidence" value="ECO:0007669"/>
    <property type="project" value="TreeGrafter"/>
</dbReference>
<dbReference type="GO" id="GO:0003735">
    <property type="term" value="F:structural constituent of ribosome"/>
    <property type="evidence" value="ECO:0007669"/>
    <property type="project" value="InterPro"/>
</dbReference>
<dbReference type="GO" id="GO:0006412">
    <property type="term" value="P:translation"/>
    <property type="evidence" value="ECO:0007669"/>
    <property type="project" value="UniProtKB-UniRule"/>
</dbReference>
<dbReference type="FunFam" id="2.30.30.790:FF:000001">
    <property type="entry name" value="50S ribosomal protein L19"/>
    <property type="match status" value="1"/>
</dbReference>
<dbReference type="Gene3D" id="2.30.30.790">
    <property type="match status" value="1"/>
</dbReference>
<dbReference type="HAMAP" id="MF_00402">
    <property type="entry name" value="Ribosomal_bL19"/>
    <property type="match status" value="1"/>
</dbReference>
<dbReference type="InterPro" id="IPR001857">
    <property type="entry name" value="Ribosomal_bL19"/>
</dbReference>
<dbReference type="InterPro" id="IPR018257">
    <property type="entry name" value="Ribosomal_bL19_CS"/>
</dbReference>
<dbReference type="InterPro" id="IPR038657">
    <property type="entry name" value="Ribosomal_bL19_sf"/>
</dbReference>
<dbReference type="InterPro" id="IPR008991">
    <property type="entry name" value="Translation_prot_SH3-like_sf"/>
</dbReference>
<dbReference type="NCBIfam" id="TIGR01024">
    <property type="entry name" value="rplS_bact"/>
    <property type="match status" value="1"/>
</dbReference>
<dbReference type="PANTHER" id="PTHR15680:SF9">
    <property type="entry name" value="LARGE RIBOSOMAL SUBUNIT PROTEIN BL19M"/>
    <property type="match status" value="1"/>
</dbReference>
<dbReference type="PANTHER" id="PTHR15680">
    <property type="entry name" value="RIBOSOMAL PROTEIN L19"/>
    <property type="match status" value="1"/>
</dbReference>
<dbReference type="Pfam" id="PF01245">
    <property type="entry name" value="Ribosomal_L19"/>
    <property type="match status" value="1"/>
</dbReference>
<dbReference type="PIRSF" id="PIRSF002191">
    <property type="entry name" value="Ribosomal_L19"/>
    <property type="match status" value="1"/>
</dbReference>
<dbReference type="PRINTS" id="PR00061">
    <property type="entry name" value="RIBOSOMALL19"/>
</dbReference>
<dbReference type="SUPFAM" id="SSF50104">
    <property type="entry name" value="Translation proteins SH3-like domain"/>
    <property type="match status" value="1"/>
</dbReference>
<dbReference type="PROSITE" id="PS01015">
    <property type="entry name" value="RIBOSOMAL_L19"/>
    <property type="match status" value="1"/>
</dbReference>
<protein>
    <recommendedName>
        <fullName evidence="1">Large ribosomal subunit protein bL19</fullName>
    </recommendedName>
    <alternativeName>
        <fullName evidence="2">50S ribosomal protein L19</fullName>
    </alternativeName>
</protein>
<accession>A4YK97</accession>
<reference key="1">
    <citation type="journal article" date="2007" name="Science">
        <title>Legumes symbioses: absence of nod genes in photosynthetic bradyrhizobia.</title>
        <authorList>
            <person name="Giraud E."/>
            <person name="Moulin L."/>
            <person name="Vallenet D."/>
            <person name="Barbe V."/>
            <person name="Cytryn E."/>
            <person name="Avarre J.-C."/>
            <person name="Jaubert M."/>
            <person name="Simon D."/>
            <person name="Cartieaux F."/>
            <person name="Prin Y."/>
            <person name="Bena G."/>
            <person name="Hannibal L."/>
            <person name="Fardoux J."/>
            <person name="Kojadinovic M."/>
            <person name="Vuillet L."/>
            <person name="Lajus A."/>
            <person name="Cruveiller S."/>
            <person name="Rouy Z."/>
            <person name="Mangenot S."/>
            <person name="Segurens B."/>
            <person name="Dossat C."/>
            <person name="Franck W.L."/>
            <person name="Chang W.-S."/>
            <person name="Saunders E."/>
            <person name="Bruce D."/>
            <person name="Richardson P."/>
            <person name="Normand P."/>
            <person name="Dreyfus B."/>
            <person name="Pignol D."/>
            <person name="Stacey G."/>
            <person name="Emerich D."/>
            <person name="Vermeglio A."/>
            <person name="Medigue C."/>
            <person name="Sadowsky M."/>
        </authorList>
    </citation>
    <scope>NUCLEOTIDE SEQUENCE [LARGE SCALE GENOMIC DNA]</scope>
    <source>
        <strain>ORS 278</strain>
    </source>
</reference>
<gene>
    <name evidence="1" type="primary">rplS</name>
    <name type="ordered locus">BRADO0375</name>
</gene>
<evidence type="ECO:0000255" key="1">
    <source>
        <dbReference type="HAMAP-Rule" id="MF_00402"/>
    </source>
</evidence>
<evidence type="ECO:0000305" key="2"/>
<feature type="chain" id="PRO_1000049640" description="Large ribosomal subunit protein bL19">
    <location>
        <begin position="1"/>
        <end position="128"/>
    </location>
</feature>
<organism>
    <name type="scientific">Bradyrhizobium sp. (strain ORS 278)</name>
    <dbReference type="NCBI Taxonomy" id="114615"/>
    <lineage>
        <taxon>Bacteria</taxon>
        <taxon>Pseudomonadati</taxon>
        <taxon>Pseudomonadota</taxon>
        <taxon>Alphaproteobacteria</taxon>
        <taxon>Hyphomicrobiales</taxon>
        <taxon>Nitrobacteraceae</taxon>
        <taxon>Bradyrhizobium</taxon>
    </lineage>
</organism>
<comment type="function">
    <text evidence="1">This protein is located at the 30S-50S ribosomal subunit interface and may play a role in the structure and function of the aminoacyl-tRNA binding site.</text>
</comment>
<comment type="similarity">
    <text evidence="1">Belongs to the bacterial ribosomal protein bL19 family.</text>
</comment>
<sequence>MNLIQQLEKEQFDKLSANKTIPEFGPGDTVIVNVKVVEGERTRVQAYEGVCIGRSGGGINESFTVRKISYGEGVERVFPILSPMIDSIKVVRRGKVRRAKLYYLRQLRGKSARIVEKQDRQQAAAVNE</sequence>
<name>RL19_BRASO</name>